<evidence type="ECO:0000250" key="1">
    <source>
        <dbReference type="UniProtKB" id="B2HSU5"/>
    </source>
</evidence>
<evidence type="ECO:0000250" key="2">
    <source>
        <dbReference type="UniProtKB" id="O53943"/>
    </source>
</evidence>
<evidence type="ECO:0000303" key="3">
    <source>
    </source>
</evidence>
<evidence type="ECO:0000305" key="4"/>
<feature type="chain" id="PRO_0000394153" description="ESX-2 secretion-associated protein EspG2">
    <location>
        <begin position="1"/>
        <end position="276"/>
    </location>
</feature>
<keyword id="KW-0143">Chaperone</keyword>
<keyword id="KW-0963">Cytoplasm</keyword>
<keyword id="KW-1185">Reference proteome</keyword>
<gene>
    <name evidence="3" type="primary">espG2</name>
    <name type="ordered locus">Rv3889c</name>
</gene>
<proteinExistence type="inferred from homology"/>
<reference key="1">
    <citation type="journal article" date="1998" name="Nature">
        <title>Deciphering the biology of Mycobacterium tuberculosis from the complete genome sequence.</title>
        <authorList>
            <person name="Cole S.T."/>
            <person name="Brosch R."/>
            <person name="Parkhill J."/>
            <person name="Garnier T."/>
            <person name="Churcher C.M."/>
            <person name="Harris D.E."/>
            <person name="Gordon S.V."/>
            <person name="Eiglmeier K."/>
            <person name="Gas S."/>
            <person name="Barry C.E. III"/>
            <person name="Tekaia F."/>
            <person name="Badcock K."/>
            <person name="Basham D."/>
            <person name="Brown D."/>
            <person name="Chillingworth T."/>
            <person name="Connor R."/>
            <person name="Davies R.M."/>
            <person name="Devlin K."/>
            <person name="Feltwell T."/>
            <person name="Gentles S."/>
            <person name="Hamlin N."/>
            <person name="Holroyd S."/>
            <person name="Hornsby T."/>
            <person name="Jagels K."/>
            <person name="Krogh A."/>
            <person name="McLean J."/>
            <person name="Moule S."/>
            <person name="Murphy L.D."/>
            <person name="Oliver S."/>
            <person name="Osborne J."/>
            <person name="Quail M.A."/>
            <person name="Rajandream M.A."/>
            <person name="Rogers J."/>
            <person name="Rutter S."/>
            <person name="Seeger K."/>
            <person name="Skelton S."/>
            <person name="Squares S."/>
            <person name="Squares R."/>
            <person name="Sulston J.E."/>
            <person name="Taylor K."/>
            <person name="Whitehead S."/>
            <person name="Barrell B.G."/>
        </authorList>
    </citation>
    <scope>NUCLEOTIDE SEQUENCE [LARGE SCALE GENOMIC DNA]</scope>
    <source>
        <strain>ATCC 25618 / H37Rv</strain>
    </source>
</reference>
<reference key="2">
    <citation type="journal article" date="2009" name="PLoS Pathog.">
        <title>Systematic genetic nomenclature for type VII secretion systems.</title>
        <authorList>
            <person name="Bitter W."/>
            <person name="Houben E.N."/>
            <person name="Bottai D."/>
            <person name="Brodin P."/>
            <person name="Brown E.J."/>
            <person name="Cox J.S."/>
            <person name="Derbyshire K."/>
            <person name="Fortune S.M."/>
            <person name="Gao L.Y."/>
            <person name="Liu J."/>
            <person name="Gey van Pittius N.C."/>
            <person name="Pym A.S."/>
            <person name="Rubin E.J."/>
            <person name="Sherman D.R."/>
            <person name="Cole S.T."/>
            <person name="Brosch R."/>
        </authorList>
    </citation>
    <scope>NOMENCLATURE</scope>
</reference>
<protein>
    <recommendedName>
        <fullName evidence="4">ESX-2 secretion-associated protein EspG2</fullName>
    </recommendedName>
</protein>
<dbReference type="EMBL" id="AL123456">
    <property type="protein sequence ID" value="CCP46718.1"/>
    <property type="molecule type" value="Genomic_DNA"/>
</dbReference>
<dbReference type="PIR" id="B70598">
    <property type="entry name" value="B70598"/>
</dbReference>
<dbReference type="RefSeq" id="NP_218406.1">
    <property type="nucleotide sequence ID" value="NC_000962.3"/>
</dbReference>
<dbReference type="RefSeq" id="WP_003400028.1">
    <property type="nucleotide sequence ID" value="NZ_NVQJ01000005.1"/>
</dbReference>
<dbReference type="SMR" id="P9WJC9"/>
<dbReference type="STRING" id="83332.Rv3889c"/>
<dbReference type="PaxDb" id="83332-Rv3889c"/>
<dbReference type="DNASU" id="886223"/>
<dbReference type="GeneID" id="45427892"/>
<dbReference type="GeneID" id="886223"/>
<dbReference type="KEGG" id="mtu:Rv3889c"/>
<dbReference type="KEGG" id="mtv:RVBD_3889c"/>
<dbReference type="TubercuList" id="Rv3889c"/>
<dbReference type="eggNOG" id="ENOG5030RDF">
    <property type="taxonomic scope" value="Bacteria"/>
</dbReference>
<dbReference type="InParanoid" id="P9WJC9"/>
<dbReference type="OrthoDB" id="4741091at2"/>
<dbReference type="Proteomes" id="UP000001584">
    <property type="component" value="Chromosome"/>
</dbReference>
<dbReference type="GO" id="GO:0005737">
    <property type="term" value="C:cytoplasm"/>
    <property type="evidence" value="ECO:0007669"/>
    <property type="project" value="UniProtKB-SubCell"/>
</dbReference>
<dbReference type="InterPro" id="IPR025734">
    <property type="entry name" value="EspG"/>
</dbReference>
<dbReference type="Pfam" id="PF14011">
    <property type="entry name" value="ESX-1_EspG"/>
    <property type="match status" value="1"/>
</dbReference>
<organism>
    <name type="scientific">Mycobacterium tuberculosis (strain ATCC 25618 / H37Rv)</name>
    <dbReference type="NCBI Taxonomy" id="83332"/>
    <lineage>
        <taxon>Bacteria</taxon>
        <taxon>Bacillati</taxon>
        <taxon>Actinomycetota</taxon>
        <taxon>Actinomycetes</taxon>
        <taxon>Mycobacteriales</taxon>
        <taxon>Mycobacteriaceae</taxon>
        <taxon>Mycobacterium</taxon>
        <taxon>Mycobacterium tuberculosis complex</taxon>
    </lineage>
</organism>
<name>ESPG2_MYCTU</name>
<comment type="function">
    <text evidence="2">Specific chaperone for cognate PE/PPE proteins. Plays an important role in preventing aggregation of PE/PPE dimers.</text>
</comment>
<comment type="subunit">
    <text evidence="2">Interacts specifically with ESX-2-dependent PE/PPE proteins.</text>
</comment>
<comment type="subcellular location">
    <subcellularLocation>
        <location evidence="1">Cytoplasm</location>
    </subcellularLocation>
</comment>
<comment type="similarity">
    <text evidence="4">Belongs to the EspG family.</text>
</comment>
<accession>P9WJC9</accession>
<accession>L0TDV4</accession>
<accession>O05455</accession>
<accession>Q7D4N6</accession>
<sequence length="276" mass="29596">MLTTTVDGLWVLQAVTGVEQTCPELGLRPLLPRLDTAERALRHPVAAELMAVGALDQAGNADPMVREWLTVLLRRDLGLLVTIGVPGGEPTRAAICRFATWWVVLERHGNLVRLYPAGTASDEAGAGELVVGQVERLCGVAEAAPLRPVTVDADELLHAVRDAGTLRSYLLSQRLDVDQLQMVTMAADPTRSAHATLVALQAGVGPEKSARILVGDSTVAIVDTAAGRICVESVTSGQRRYQVLSPGSRSDIGGAVQRLIRRLPAGDEWYSYRRVV</sequence>